<evidence type="ECO:0000255" key="1">
    <source>
        <dbReference type="HAMAP-Rule" id="MF_00414"/>
    </source>
</evidence>
<keyword id="KW-0067">ATP-binding</keyword>
<keyword id="KW-0997">Cell inner membrane</keyword>
<keyword id="KW-1003">Cell membrane</keyword>
<keyword id="KW-0418">Kinase</keyword>
<keyword id="KW-0472">Membrane</keyword>
<keyword id="KW-0547">Nucleotide-binding</keyword>
<keyword id="KW-1185">Reference proteome</keyword>
<keyword id="KW-0808">Transferase</keyword>
<keyword id="KW-0812">Transmembrane</keyword>
<keyword id="KW-1133">Transmembrane helix</keyword>
<keyword id="KW-0831">Ubiquinone biosynthesis</keyword>
<feature type="chain" id="PRO_1000050067" description="Probable protein kinase UbiB">
    <location>
        <begin position="1"/>
        <end position="546"/>
    </location>
</feature>
<feature type="transmembrane region" description="Helical" evidence="1">
    <location>
        <begin position="501"/>
        <end position="521"/>
    </location>
</feature>
<feature type="transmembrane region" description="Helical" evidence="1">
    <location>
        <begin position="522"/>
        <end position="542"/>
    </location>
</feature>
<feature type="domain" description="Protein kinase" evidence="1">
    <location>
        <begin position="124"/>
        <end position="502"/>
    </location>
</feature>
<feature type="active site" description="Proton acceptor" evidence="1">
    <location>
        <position position="288"/>
    </location>
</feature>
<feature type="binding site" evidence="1">
    <location>
        <begin position="130"/>
        <end position="138"/>
    </location>
    <ligand>
        <name>ATP</name>
        <dbReference type="ChEBI" id="CHEBI:30616"/>
    </ligand>
</feature>
<feature type="binding site" evidence="1">
    <location>
        <position position="153"/>
    </location>
    <ligand>
        <name>ATP</name>
        <dbReference type="ChEBI" id="CHEBI:30616"/>
    </ligand>
</feature>
<gene>
    <name evidence="1" type="primary">ubiB</name>
    <name type="ordered locus">SSON_4010</name>
</gene>
<proteinExistence type="inferred from homology"/>
<organism>
    <name type="scientific">Shigella sonnei (strain Ss046)</name>
    <dbReference type="NCBI Taxonomy" id="300269"/>
    <lineage>
        <taxon>Bacteria</taxon>
        <taxon>Pseudomonadati</taxon>
        <taxon>Pseudomonadota</taxon>
        <taxon>Gammaproteobacteria</taxon>
        <taxon>Enterobacterales</taxon>
        <taxon>Enterobacteriaceae</taxon>
        <taxon>Shigella</taxon>
    </lineage>
</organism>
<protein>
    <recommendedName>
        <fullName evidence="1">Probable protein kinase UbiB</fullName>
        <ecNumber evidence="1">2.7.-.-</ecNumber>
    </recommendedName>
    <alternativeName>
        <fullName evidence="1">Ubiquinone biosynthesis protein UbiB</fullName>
    </alternativeName>
</protein>
<sequence length="546" mass="63233">MTPGEVRRLYFIIRTFLSYGLDELIPKMRITLPLRLWRYSLFWMPNRHKDKLLGERLRLALQELGPVWIKFGQMLSTRRDLFPPHIADQLALLQDKVAPFDGKLAKQQIEAAMGGLPVEAWFDDFEIKPLASASIAQVHTARLKSNGKEVVIKVIRPDILPVIKADLKLIYRLARWVPRLLPDGRRLRPTEVVREYEKTLIDELNLLRESANAIQLRRNFEDSPMLYIPEVYPDYCSEGMMVMERIYGIPVSDVATLEKNGTNMKLLAERGVQVFFTQVFRDSFFHADMHPGNIFVSYEHPENPKYIGIDCGIVGSLNKEDKRYLAENFIAFFNRDYRKVAELHVDSGWVPPDTNVEEFEFAIRTVCEPIFEKPLAEISFGHVLLNLFNTARRFNMEVQPQLVLLQKTLLYVEGVGRQLYPQLDLWKTAKPFLESWIKDQVGIPALVRAFKEKAPFWVEKMPELPELVYDSLRQGKYLQHSVDKIARELQSNHVRQGQSRYFLGIGATLVLSGTFLLVSRPEWGLMPGWLMAGGLIAWFVGWRKTR</sequence>
<accession>Q3YVD0</accession>
<reference key="1">
    <citation type="journal article" date="2005" name="Nucleic Acids Res.">
        <title>Genome dynamics and diversity of Shigella species, the etiologic agents of bacillary dysentery.</title>
        <authorList>
            <person name="Yang F."/>
            <person name="Yang J."/>
            <person name="Zhang X."/>
            <person name="Chen L."/>
            <person name="Jiang Y."/>
            <person name="Yan Y."/>
            <person name="Tang X."/>
            <person name="Wang J."/>
            <person name="Xiong Z."/>
            <person name="Dong J."/>
            <person name="Xue Y."/>
            <person name="Zhu Y."/>
            <person name="Xu X."/>
            <person name="Sun L."/>
            <person name="Chen S."/>
            <person name="Nie H."/>
            <person name="Peng J."/>
            <person name="Xu J."/>
            <person name="Wang Y."/>
            <person name="Yuan Z."/>
            <person name="Wen Y."/>
            <person name="Yao Z."/>
            <person name="Shen Y."/>
            <person name="Qiang B."/>
            <person name="Hou Y."/>
            <person name="Yu J."/>
            <person name="Jin Q."/>
        </authorList>
    </citation>
    <scope>NUCLEOTIDE SEQUENCE [LARGE SCALE GENOMIC DNA]</scope>
    <source>
        <strain>Ss046</strain>
    </source>
</reference>
<dbReference type="EC" id="2.7.-.-" evidence="1"/>
<dbReference type="EMBL" id="CP000038">
    <property type="protein sequence ID" value="AAZ90532.1"/>
    <property type="molecule type" value="Genomic_DNA"/>
</dbReference>
<dbReference type="RefSeq" id="WP_000187535.1">
    <property type="nucleotide sequence ID" value="NC_007384.1"/>
</dbReference>
<dbReference type="SMR" id="Q3YVD0"/>
<dbReference type="GeneID" id="93778100"/>
<dbReference type="KEGG" id="ssn:SSON_4010"/>
<dbReference type="HOGENOM" id="CLU_006533_0_0_6"/>
<dbReference type="UniPathway" id="UPA00232"/>
<dbReference type="Proteomes" id="UP000002529">
    <property type="component" value="Chromosome"/>
</dbReference>
<dbReference type="GO" id="GO:0005886">
    <property type="term" value="C:plasma membrane"/>
    <property type="evidence" value="ECO:0007669"/>
    <property type="project" value="UniProtKB-SubCell"/>
</dbReference>
<dbReference type="GO" id="GO:0005524">
    <property type="term" value="F:ATP binding"/>
    <property type="evidence" value="ECO:0007669"/>
    <property type="project" value="UniProtKB-KW"/>
</dbReference>
<dbReference type="GO" id="GO:0004672">
    <property type="term" value="F:protein kinase activity"/>
    <property type="evidence" value="ECO:0007669"/>
    <property type="project" value="UniProtKB-UniRule"/>
</dbReference>
<dbReference type="GO" id="GO:0010795">
    <property type="term" value="P:regulation of ubiquinone biosynthetic process"/>
    <property type="evidence" value="ECO:0007669"/>
    <property type="project" value="UniProtKB-UniRule"/>
</dbReference>
<dbReference type="GO" id="GO:0006744">
    <property type="term" value="P:ubiquinone biosynthetic process"/>
    <property type="evidence" value="ECO:0007669"/>
    <property type="project" value="UniProtKB-UniPathway"/>
</dbReference>
<dbReference type="CDD" id="cd13972">
    <property type="entry name" value="UbiB"/>
    <property type="match status" value="1"/>
</dbReference>
<dbReference type="HAMAP" id="MF_00414">
    <property type="entry name" value="UbiB"/>
    <property type="match status" value="1"/>
</dbReference>
<dbReference type="InterPro" id="IPR004147">
    <property type="entry name" value="ABC1_dom"/>
</dbReference>
<dbReference type="InterPro" id="IPR011009">
    <property type="entry name" value="Kinase-like_dom_sf"/>
</dbReference>
<dbReference type="InterPro" id="IPR010232">
    <property type="entry name" value="UbiB"/>
</dbReference>
<dbReference type="InterPro" id="IPR045308">
    <property type="entry name" value="UbiB_bact"/>
</dbReference>
<dbReference type="InterPro" id="IPR050154">
    <property type="entry name" value="UbiB_kinase"/>
</dbReference>
<dbReference type="NCBIfam" id="NF003404">
    <property type="entry name" value="PRK04750.1"/>
    <property type="match status" value="1"/>
</dbReference>
<dbReference type="NCBIfam" id="TIGR01982">
    <property type="entry name" value="UbiB"/>
    <property type="match status" value="1"/>
</dbReference>
<dbReference type="PANTHER" id="PTHR10566">
    <property type="entry name" value="CHAPERONE-ACTIVITY OF BC1 COMPLEX CABC1 -RELATED"/>
    <property type="match status" value="1"/>
</dbReference>
<dbReference type="PANTHER" id="PTHR10566:SF113">
    <property type="entry name" value="PROTEIN ACTIVITY OF BC1 COMPLEX KINASE 7, CHLOROPLASTIC"/>
    <property type="match status" value="1"/>
</dbReference>
<dbReference type="Pfam" id="PF03109">
    <property type="entry name" value="ABC1"/>
    <property type="match status" value="1"/>
</dbReference>
<dbReference type="SUPFAM" id="SSF56112">
    <property type="entry name" value="Protein kinase-like (PK-like)"/>
    <property type="match status" value="1"/>
</dbReference>
<comment type="function">
    <text evidence="1">Is probably a protein kinase regulator of UbiI activity which is involved in aerobic coenzyme Q (ubiquinone) biosynthesis.</text>
</comment>
<comment type="pathway">
    <text>Cofactor biosynthesis; ubiquinone biosynthesis [regulation].</text>
</comment>
<comment type="subcellular location">
    <subcellularLocation>
        <location evidence="1">Cell inner membrane</location>
        <topology evidence="1">Multi-pass membrane protein</topology>
    </subcellularLocation>
</comment>
<comment type="similarity">
    <text evidence="1">Belongs to the ABC1 family. UbiB subfamily.</text>
</comment>
<name>UBIB_SHISS</name>